<name>PDYN_RAT</name>
<gene>
    <name type="primary">Pdyn</name>
</gene>
<sequence length="248" mass="28079">MAWSRLMLAACLLVIPSEVAADCLSLCSLCAVRTQDGPHPINPLICSLECQDLVPPSEEWETCRGFWSFLTLTASGLHGKDDLENEVALEEGYTALTKLLEPLLKELEKGQLLTSVSEEKLRGLSSRFGNGRESELLGTDLMNDEAAQAGTLHFNEEDLRKQAKRYGGFLRKYPKRSSEMTGDEDRGQDGDQVGHEDLYKRYGGFLRRIRPKLKWDNQKRYGGFLRRQFKVVTRSQENPNTYSEDLDV</sequence>
<dbReference type="EMBL" id="M32784">
    <property type="protein sequence ID" value="AAA41117.1"/>
    <property type="molecule type" value="Genomic_DNA"/>
</dbReference>
<dbReference type="EMBL" id="M32783">
    <property type="protein sequence ID" value="AAA41117.1"/>
    <property type="status" value="JOINED"/>
    <property type="molecule type" value="Genomic_DNA"/>
</dbReference>
<dbReference type="EMBL" id="M10088">
    <property type="protein sequence ID" value="AAA41118.1"/>
    <property type="molecule type" value="Genomic_DNA"/>
</dbReference>
<dbReference type="PIR" id="A41395">
    <property type="entry name" value="DFRTP"/>
</dbReference>
<dbReference type="BMRB" id="P06300"/>
<dbReference type="ELM" id="P06300"/>
<dbReference type="FunCoup" id="P06300">
    <property type="interactions" value="36"/>
</dbReference>
<dbReference type="STRING" id="10116.ENSRNOP00000038921"/>
<dbReference type="iPTMnet" id="P06300"/>
<dbReference type="PhosphoSitePlus" id="P06300"/>
<dbReference type="PaxDb" id="10116-ENSRNOP00000038921"/>
<dbReference type="UCSC" id="RGD:62054">
    <property type="organism name" value="rat"/>
</dbReference>
<dbReference type="AGR" id="RGD:62054"/>
<dbReference type="RGD" id="62054">
    <property type="gene designation" value="Pdyn"/>
</dbReference>
<dbReference type="eggNOG" id="ENOG502RXT4">
    <property type="taxonomic scope" value="Eukaryota"/>
</dbReference>
<dbReference type="InParanoid" id="P06300"/>
<dbReference type="PhylomeDB" id="P06300"/>
<dbReference type="Reactome" id="R-RNO-111885">
    <property type="pathway name" value="Opioid Signalling"/>
</dbReference>
<dbReference type="Reactome" id="R-RNO-202040">
    <property type="pathway name" value="G-protein activation"/>
</dbReference>
<dbReference type="Reactome" id="R-RNO-375276">
    <property type="pathway name" value="Peptide ligand-binding receptors"/>
</dbReference>
<dbReference type="Reactome" id="R-RNO-418594">
    <property type="pathway name" value="G alpha (i) signalling events"/>
</dbReference>
<dbReference type="PRO" id="PR:P06300"/>
<dbReference type="Proteomes" id="UP000002494">
    <property type="component" value="Unplaced"/>
</dbReference>
<dbReference type="GO" id="GO:0043679">
    <property type="term" value="C:axon terminus"/>
    <property type="evidence" value="ECO:0000314"/>
    <property type="project" value="RGD"/>
</dbReference>
<dbReference type="GO" id="GO:0030425">
    <property type="term" value="C:dendrite"/>
    <property type="evidence" value="ECO:0000318"/>
    <property type="project" value="GO_Central"/>
</dbReference>
<dbReference type="GO" id="GO:0043197">
    <property type="term" value="C:dendritic spine"/>
    <property type="evidence" value="ECO:0000314"/>
    <property type="project" value="RGD"/>
</dbReference>
<dbReference type="GO" id="GO:0031045">
    <property type="term" value="C:dense core granule"/>
    <property type="evidence" value="ECO:0000314"/>
    <property type="project" value="RGD"/>
</dbReference>
<dbReference type="GO" id="GO:0005615">
    <property type="term" value="C:extracellular space"/>
    <property type="evidence" value="ECO:0000314"/>
    <property type="project" value="RGD"/>
</dbReference>
<dbReference type="GO" id="GO:0005794">
    <property type="term" value="C:Golgi apparatus"/>
    <property type="evidence" value="ECO:0000314"/>
    <property type="project" value="RGD"/>
</dbReference>
<dbReference type="GO" id="GO:0098686">
    <property type="term" value="C:hippocampal mossy fiber to CA3 synapse"/>
    <property type="evidence" value="ECO:0000266"/>
    <property type="project" value="RGD"/>
</dbReference>
<dbReference type="GO" id="GO:0043025">
    <property type="term" value="C:neuronal cell body"/>
    <property type="evidence" value="ECO:0000314"/>
    <property type="project" value="RGD"/>
</dbReference>
<dbReference type="GO" id="GO:0098992">
    <property type="term" value="C:neuronal dense core vesicle"/>
    <property type="evidence" value="ECO:0000266"/>
    <property type="project" value="RGD"/>
</dbReference>
<dbReference type="GO" id="GO:0099013">
    <property type="term" value="C:neuronal dense core vesicle lumen"/>
    <property type="evidence" value="ECO:0000314"/>
    <property type="project" value="SynGO"/>
</dbReference>
<dbReference type="GO" id="GO:0005886">
    <property type="term" value="C:plasma membrane"/>
    <property type="evidence" value="ECO:0000266"/>
    <property type="project" value="RGD"/>
</dbReference>
<dbReference type="GO" id="GO:0008021">
    <property type="term" value="C:synaptic vesicle"/>
    <property type="evidence" value="ECO:0000314"/>
    <property type="project" value="SynGO"/>
</dbReference>
<dbReference type="GO" id="GO:0001515">
    <property type="term" value="F:opioid peptide activity"/>
    <property type="evidence" value="ECO:0007669"/>
    <property type="project" value="UniProtKB-KW"/>
</dbReference>
<dbReference type="GO" id="GO:0007268">
    <property type="term" value="P:chemical synaptic transmission"/>
    <property type="evidence" value="ECO:0000318"/>
    <property type="project" value="GO_Central"/>
</dbReference>
<dbReference type="GO" id="GO:0007218">
    <property type="term" value="P:neuropeptide signaling pathway"/>
    <property type="evidence" value="ECO:0000318"/>
    <property type="project" value="GO_Central"/>
</dbReference>
<dbReference type="GO" id="GO:0035902">
    <property type="term" value="P:response to immobilization stress"/>
    <property type="evidence" value="ECO:0000270"/>
    <property type="project" value="RGD"/>
</dbReference>
<dbReference type="GO" id="GO:0035094">
    <property type="term" value="P:response to nicotine"/>
    <property type="evidence" value="ECO:0000270"/>
    <property type="project" value="RGD"/>
</dbReference>
<dbReference type="GO" id="GO:0007600">
    <property type="term" value="P:sensory perception"/>
    <property type="evidence" value="ECO:0000318"/>
    <property type="project" value="GO_Central"/>
</dbReference>
<dbReference type="InterPro" id="IPR006024">
    <property type="entry name" value="Opioid_neupept"/>
</dbReference>
<dbReference type="InterPro" id="IPR000750">
    <property type="entry name" value="Proenkphlin_B"/>
</dbReference>
<dbReference type="PANTHER" id="PTHR11438">
    <property type="entry name" value="PROENKEPHALIN"/>
    <property type="match status" value="1"/>
</dbReference>
<dbReference type="PANTHER" id="PTHR11438:SF4">
    <property type="entry name" value="PROENKEPHALIN-B"/>
    <property type="match status" value="1"/>
</dbReference>
<dbReference type="Pfam" id="PF01160">
    <property type="entry name" value="Opiods_neuropep"/>
    <property type="match status" value="1"/>
</dbReference>
<dbReference type="PRINTS" id="PR01028">
    <property type="entry name" value="OPIOIDPRCRSR"/>
</dbReference>
<dbReference type="PRINTS" id="PR01030">
    <property type="entry name" value="PENKBPRCRSR"/>
</dbReference>
<dbReference type="PROSITE" id="PS01252">
    <property type="entry name" value="OPIOIDS_PRECURSOR"/>
    <property type="match status" value="1"/>
</dbReference>
<feature type="signal peptide" evidence="2">
    <location>
        <begin position="1"/>
        <end position="21"/>
    </location>
</feature>
<feature type="propeptide" id="PRO_0000008198">
    <location>
        <begin position="22"/>
        <end position="163"/>
    </location>
</feature>
<feature type="peptide" id="PRO_0000306365" description="Alpha-neoendorphin">
    <location>
        <begin position="166"/>
        <end position="175"/>
    </location>
</feature>
<feature type="peptide" id="PRO_0000008199" description="Beta-neoendorphin">
    <location>
        <begin position="166"/>
        <end position="174"/>
    </location>
</feature>
<feature type="peptide" id="PRO_0000008200" description="Leu-enkephalin">
    <location>
        <begin position="166"/>
        <end position="170"/>
    </location>
</feature>
<feature type="propeptide" id="PRO_0000008201">
    <location>
        <begin position="177"/>
        <end position="199"/>
    </location>
</feature>
<feature type="peptide" id="PRO_0000306366" description="Big dynorphin" evidence="1">
    <location>
        <begin position="202"/>
        <end position="233"/>
    </location>
</feature>
<feature type="peptide" id="PRO_0000008202" description="Dynorphin A(1-17)">
    <location>
        <begin position="202"/>
        <end position="218"/>
    </location>
</feature>
<feature type="peptide" id="PRO_0000306367" description="Dynorphin A(1-13)" evidence="1">
    <location>
        <begin position="202"/>
        <end position="214"/>
    </location>
</feature>
<feature type="peptide" id="PRO_0000306368" description="Dynorphin A(1-8)" evidence="1">
    <location>
        <begin position="202"/>
        <end position="209"/>
    </location>
</feature>
<feature type="peptide" id="PRO_0000008203" description="Leu-enkephalin">
    <location>
        <begin position="202"/>
        <end position="206"/>
    </location>
</feature>
<feature type="peptide" id="PRO_0000008204" description="Leumorphin">
    <location>
        <begin position="221"/>
        <end position="248"/>
    </location>
</feature>
<feature type="peptide" id="PRO_0000306369" description="Rimorphin" evidence="1">
    <location>
        <begin position="221"/>
        <end position="233"/>
    </location>
</feature>
<feature type="peptide" id="PRO_0000008205" description="Leu-enkephalin">
    <location>
        <begin position="221"/>
        <end position="225"/>
    </location>
</feature>
<feature type="region of interest" description="Disordered" evidence="3">
    <location>
        <begin position="174"/>
        <end position="195"/>
    </location>
</feature>
<feature type="compositionally biased region" description="Basic and acidic residues" evidence="3">
    <location>
        <begin position="183"/>
        <end position="195"/>
    </location>
</feature>
<feature type="sequence conflict" description="In Ref. 2; AAA41118." evidence="4" ref="2">
    <original>T</original>
    <variation>A</variation>
    <location>
        <position position="181"/>
    </location>
</feature>
<evidence type="ECO:0000250" key="1"/>
<evidence type="ECO:0000255" key="2"/>
<evidence type="ECO:0000256" key="3">
    <source>
        <dbReference type="SAM" id="MobiDB-lite"/>
    </source>
</evidence>
<evidence type="ECO:0000305" key="4"/>
<keyword id="KW-0165">Cleavage on pair of basic residues</keyword>
<keyword id="KW-0903">Direct protein sequencing</keyword>
<keyword id="KW-1015">Disulfide bond</keyword>
<keyword id="KW-0257">Endorphin</keyword>
<keyword id="KW-0527">Neuropeptide</keyword>
<keyword id="KW-0529">Neurotransmitter</keyword>
<keyword id="KW-0555">Opioid peptide</keyword>
<keyword id="KW-1185">Reference proteome</keyword>
<keyword id="KW-0964">Secreted</keyword>
<keyword id="KW-0732">Signal</keyword>
<reference key="1">
    <citation type="journal article" date="1989" name="Mol. Endocrinol.">
        <title>Characterization of the rat prodynorphin gene.</title>
        <authorList>
            <person name="Douglass J."/>
            <person name="McMurray C.T."/>
            <person name="Garrett J.E."/>
            <person name="Adelman J.P."/>
            <person name="Calavetta L."/>
        </authorList>
    </citation>
    <scope>NUCLEOTIDE SEQUENCE [GENOMIC DNA]</scope>
</reference>
<reference key="2">
    <citation type="journal article" date="1985" name="Proc. Natl. Acad. Sci. U.S.A.">
        <title>Sequence and expression of the rat prodynorphin gene.</title>
        <authorList>
            <person name="Civelli O."/>
            <person name="Douglass J."/>
            <person name="Goldstein A."/>
            <person name="Herbert E."/>
        </authorList>
    </citation>
    <scope>NUCLEOTIDE SEQUENCE [GENOMIC DNA] OF 45-248</scope>
    <source>
        <tissue>Hypothalamus</tissue>
    </source>
</reference>
<reference key="3">
    <citation type="journal article" date="1994" name="FEBS Lett.">
        <title>Processing of prodynorphin by the prohormone convertase PC1 results in high molecular weight intermediate forms. Cleavage at a single arginine residue.</title>
        <authorList>
            <person name="Dupuy A."/>
            <person name="Lindberg I."/>
            <person name="Zhou Y."/>
            <person name="Akil H."/>
            <person name="Lazure C."/>
            <person name="Chretien M."/>
            <person name="Seidah N.G."/>
            <person name="Day R."/>
        </authorList>
    </citation>
    <scope>PROTEIN SEQUENCE OF 235-248</scope>
</reference>
<reference key="4">
    <citation type="journal article" date="1986" name="Life Sci.">
        <title>Identification of the tridecapeptide dynorphin B (rimorphin) within perikarya of rat duodenum.</title>
        <authorList>
            <person name="Wolter H.J."/>
        </authorList>
    </citation>
    <scope>IDENTIFICATION OF RIMORPHIN</scope>
</reference>
<reference key="5">
    <citation type="journal article" date="1985" name="Biochem. Biophys. Res. Commun.">
        <title>Neuropeptide processing by single-step cleavage: conversion of leumorphin (dynorphin B-29) to dynorphin B.</title>
        <authorList>
            <person name="Devi L."/>
            <person name="Goldstein A."/>
        </authorList>
    </citation>
    <scope>CONVERSION OF LEUMORPHIN TO RIMORPHIN</scope>
</reference>
<reference key="6">
    <citation type="journal article" date="1986" name="NIDA Res. Monogr.">
        <title>Bridge peptide is a cleavage product of pro-dynorphin processing in the rat anterior pituitary.</title>
        <authorList>
            <person name="Day R."/>
            <person name="Akil H."/>
        </authorList>
    </citation>
    <scope>IDENTIFICATION OF BRIDGE PEPTIDE</scope>
</reference>
<reference key="7">
    <citation type="journal article" date="2005" name="J. Neurochem.">
        <title>Leumorphin has an anti-apoptotic effect by activating epidermal growth factor receptor kinase in rat pheochromocytoma PC12 cells.</title>
        <authorList>
            <person name="Lee B.D."/>
            <person name="Kim S."/>
            <person name="Hur E.M."/>
            <person name="Park Y.S."/>
            <person name="Kim Y.H."/>
            <person name="Lee T.G."/>
            <person name="Kim K.T."/>
            <person name="Suh P.G."/>
            <person name="Ryu S.H."/>
        </authorList>
    </citation>
    <scope>FUNCTION OF LEUMORPHIN</scope>
</reference>
<protein>
    <recommendedName>
        <fullName>Proenkephalin-B</fullName>
    </recommendedName>
    <alternativeName>
        <fullName>Beta-neoendorphin-dynorphin</fullName>
    </alternativeName>
    <alternativeName>
        <fullName>Preprodynorphin</fullName>
    </alternativeName>
    <component>
        <recommendedName>
            <fullName>Alpha-neoendorphin</fullName>
        </recommendedName>
    </component>
    <component>
        <recommendedName>
            <fullName>Beta-neoendorphin</fullName>
        </recommendedName>
    </component>
    <component>
        <recommendedName>
            <fullName>Big dynorphin</fullName>
            <shortName>Big Dyn</shortName>
        </recommendedName>
    </component>
    <component>
        <recommendedName>
            <fullName>Dynorphin A(1-17)</fullName>
            <shortName>Dyn-A17</shortName>
            <shortName>Dynorphin A</shortName>
        </recommendedName>
    </component>
    <component>
        <recommendedName>
            <fullName>Dynorphin A(1-13)</fullName>
        </recommendedName>
    </component>
    <component>
        <recommendedName>
            <fullName>Dynorphin A(1-8)</fullName>
        </recommendedName>
    </component>
    <component>
        <recommendedName>
            <fullName>Leu-enkephalin</fullName>
        </recommendedName>
    </component>
    <component>
        <recommendedName>
            <fullName>Rimorphin</fullName>
        </recommendedName>
        <alternativeName>
            <fullName>Dynorphin B</fullName>
            <shortName>Dyn-B</shortName>
        </alternativeName>
        <alternativeName>
            <fullName>Dynorphin B(1-13)</fullName>
        </alternativeName>
    </component>
    <component>
        <recommendedName>
            <fullName>Leumorphin</fullName>
        </recommendedName>
        <alternativeName>
            <fullName>Dynorphin B-29</fullName>
        </alternativeName>
    </component>
</protein>
<organism>
    <name type="scientific">Rattus norvegicus</name>
    <name type="common">Rat</name>
    <dbReference type="NCBI Taxonomy" id="10116"/>
    <lineage>
        <taxon>Eukaryota</taxon>
        <taxon>Metazoa</taxon>
        <taxon>Chordata</taxon>
        <taxon>Craniata</taxon>
        <taxon>Vertebrata</taxon>
        <taxon>Euteleostomi</taxon>
        <taxon>Mammalia</taxon>
        <taxon>Eutheria</taxon>
        <taxon>Euarchontoglires</taxon>
        <taxon>Glires</taxon>
        <taxon>Rodentia</taxon>
        <taxon>Myomorpha</taxon>
        <taxon>Muroidea</taxon>
        <taxon>Muridae</taxon>
        <taxon>Murinae</taxon>
        <taxon>Rattus</taxon>
    </lineage>
</organism>
<accession>P06300</accession>
<accession>Q63193</accession>
<comment type="function">
    <text evidence="1">Leu-enkephalins compete with and mimic the effects of opiate drugs. They play a role in a number of physiologic functions, including pain perception and responses to stress (By similarity).</text>
</comment>
<comment type="function">
    <text evidence="1">Dynorphin peptides differentially regulate the kappa opioid receptor. Dynorphin A(1-13) has a typical opioid activity, it is 700 times more potent than Leu-enkephalin (By similarity).</text>
</comment>
<comment type="function">
    <text evidence="1">Leumorphin has a typical opioid activity and may have anti-apoptotic effect.</text>
</comment>
<comment type="subcellular location">
    <subcellularLocation>
        <location>Secreted</location>
    </subcellularLocation>
</comment>
<comment type="PTM">
    <text>The N-terminal domain contains 6 conserved cysteines thought to be involved in disulfide bonding and/or processing.</text>
</comment>
<comment type="similarity">
    <text evidence="4">Belongs to the opioid neuropeptide precursor family.</text>
</comment>
<proteinExistence type="evidence at protein level"/>